<dbReference type="EMBL" id="U76343">
    <property type="protein sequence ID" value="AAF64247.1"/>
    <property type="status" value="ALT_FRAME"/>
    <property type="molecule type" value="mRNA"/>
</dbReference>
<dbReference type="EMBL" id="AK296127">
    <property type="protein sequence ID" value="BAG58873.1"/>
    <property type="molecule type" value="mRNA"/>
</dbReference>
<dbReference type="EMBL" id="AF462445">
    <property type="protein sequence ID" value="AAP97713.1"/>
    <property type="molecule type" value="mRNA"/>
</dbReference>
<dbReference type="EMBL" id="AK313511">
    <property type="protein sequence ID" value="BAG36291.1"/>
    <property type="molecule type" value="mRNA"/>
</dbReference>
<dbReference type="EMBL" id="AC007406">
    <property type="status" value="NOT_ANNOTATED_CDS"/>
    <property type="molecule type" value="Genomic_DNA"/>
</dbReference>
<dbReference type="EMBL" id="CH471116">
    <property type="protein sequence ID" value="EAW88974.1"/>
    <property type="molecule type" value="Genomic_DNA"/>
</dbReference>
<dbReference type="EMBL" id="BC020867">
    <property type="protein sequence ID" value="AAH20867.1"/>
    <property type="molecule type" value="mRNA"/>
</dbReference>
<dbReference type="EMBL" id="BC022392">
    <property type="protein sequence ID" value="AAH22392.1"/>
    <property type="molecule type" value="mRNA"/>
</dbReference>
<dbReference type="CCDS" id="CCDS53729.1">
    <molecule id="Q9NSD5-2"/>
</dbReference>
<dbReference type="CCDS" id="CCDS58198.1">
    <molecule id="Q9NSD5-3"/>
</dbReference>
<dbReference type="CCDS" id="CCDS8502.1">
    <molecule id="Q9NSD5-1"/>
</dbReference>
<dbReference type="RefSeq" id="NP_001177926.1">
    <molecule id="Q9NSD5-2"/>
    <property type="nucleotide sequence ID" value="NM_001190997.3"/>
</dbReference>
<dbReference type="RefSeq" id="NP_001230321.1">
    <molecule id="Q9NSD5-3"/>
    <property type="nucleotide sequence ID" value="NM_001243392.2"/>
</dbReference>
<dbReference type="RefSeq" id="NP_057699.2">
    <molecule id="Q9NSD5-1"/>
    <property type="nucleotide sequence ID" value="NM_016615.4"/>
</dbReference>
<dbReference type="SMR" id="Q9NSD5"/>
<dbReference type="BioGRID" id="112431">
    <property type="interactions" value="4"/>
</dbReference>
<dbReference type="FunCoup" id="Q9NSD5">
    <property type="interactions" value="182"/>
</dbReference>
<dbReference type="IntAct" id="Q9NSD5">
    <property type="interactions" value="7"/>
</dbReference>
<dbReference type="STRING" id="9606.ENSP00000339260"/>
<dbReference type="BindingDB" id="Q9NSD5"/>
<dbReference type="ChEMBL" id="CHEMBL4535"/>
<dbReference type="DrugBank" id="DB08848">
    <property type="generic name" value="Guvacine"/>
</dbReference>
<dbReference type="DrugCentral" id="Q9NSD5"/>
<dbReference type="TCDB" id="2.A.22.3.10">
    <property type="family name" value="the neurotransmitter:sodium symporter (nss) family"/>
</dbReference>
<dbReference type="GlyCosmos" id="Q9NSD5">
    <property type="glycosylation" value="2 sites, No reported glycans"/>
</dbReference>
<dbReference type="GlyGen" id="Q9NSD5">
    <property type="glycosylation" value="2 sites"/>
</dbReference>
<dbReference type="iPTMnet" id="Q9NSD5"/>
<dbReference type="PhosphoSitePlus" id="Q9NSD5"/>
<dbReference type="BioMuta" id="SLC6A13"/>
<dbReference type="DMDM" id="209572724"/>
<dbReference type="jPOST" id="Q9NSD5"/>
<dbReference type="MassIVE" id="Q9NSD5"/>
<dbReference type="PaxDb" id="9606-ENSP00000339260"/>
<dbReference type="PeptideAtlas" id="Q9NSD5"/>
<dbReference type="ProteomicsDB" id="74864"/>
<dbReference type="ProteomicsDB" id="82535">
    <molecule id="Q9NSD5-1"/>
</dbReference>
<dbReference type="ProteomicsDB" id="82536">
    <molecule id="Q9NSD5-2"/>
</dbReference>
<dbReference type="Antibodypedia" id="62641">
    <property type="antibodies" value="82 antibodies from 18 providers"/>
</dbReference>
<dbReference type="DNASU" id="6540"/>
<dbReference type="Ensembl" id="ENST00000343164.9">
    <molecule id="Q9NSD5-1"/>
    <property type="protein sequence ID" value="ENSP00000339260.4"/>
    <property type="gene ID" value="ENSG00000010379.16"/>
</dbReference>
<dbReference type="Ensembl" id="ENST00000436453.1">
    <molecule id="Q9NSD5-3"/>
    <property type="protein sequence ID" value="ENSP00000389316.1"/>
    <property type="gene ID" value="ENSG00000010379.16"/>
</dbReference>
<dbReference type="Ensembl" id="ENST00000445055.6">
    <molecule id="Q9NSD5-2"/>
    <property type="protein sequence ID" value="ENSP00000407104.2"/>
    <property type="gene ID" value="ENSG00000010379.16"/>
</dbReference>
<dbReference type="GeneID" id="6540"/>
<dbReference type="KEGG" id="hsa:6540"/>
<dbReference type="MANE-Select" id="ENST00000343164.9">
    <property type="protein sequence ID" value="ENSP00000339260.4"/>
    <property type="RefSeq nucleotide sequence ID" value="NM_016615.5"/>
    <property type="RefSeq protein sequence ID" value="NP_057699.2"/>
</dbReference>
<dbReference type="UCSC" id="uc001qic.3">
    <molecule id="Q9NSD5-1"/>
    <property type="organism name" value="human"/>
</dbReference>
<dbReference type="AGR" id="HGNC:11046"/>
<dbReference type="CTD" id="6540"/>
<dbReference type="DisGeNET" id="6540"/>
<dbReference type="GeneCards" id="SLC6A13"/>
<dbReference type="HGNC" id="HGNC:11046">
    <property type="gene designation" value="SLC6A13"/>
</dbReference>
<dbReference type="HPA" id="ENSG00000010379">
    <property type="expression patterns" value="Tissue enriched (kidney)"/>
</dbReference>
<dbReference type="MalaCards" id="SLC6A13"/>
<dbReference type="MIM" id="615097">
    <property type="type" value="gene"/>
</dbReference>
<dbReference type="neXtProt" id="NX_Q9NSD5"/>
<dbReference type="OpenTargets" id="ENSG00000010379"/>
<dbReference type="PharmGKB" id="PA35909"/>
<dbReference type="VEuPathDB" id="HostDB:ENSG00000010379"/>
<dbReference type="eggNOG" id="KOG3660">
    <property type="taxonomic scope" value="Eukaryota"/>
</dbReference>
<dbReference type="GeneTree" id="ENSGT00940000157478"/>
<dbReference type="HOGENOM" id="CLU_006855_9_1_1"/>
<dbReference type="InParanoid" id="Q9NSD5"/>
<dbReference type="OMA" id="FTPAVCM"/>
<dbReference type="OrthoDB" id="6581954at2759"/>
<dbReference type="PAN-GO" id="Q9NSD5">
    <property type="GO annotations" value="4 GO annotations based on evolutionary models"/>
</dbReference>
<dbReference type="PhylomeDB" id="Q9NSD5"/>
<dbReference type="TreeFam" id="TF343812"/>
<dbReference type="PathwayCommons" id="Q9NSD5"/>
<dbReference type="Reactome" id="R-HSA-442660">
    <property type="pathway name" value="Na+/Cl- dependent neurotransmitter transporters"/>
</dbReference>
<dbReference type="Reactome" id="R-HSA-888593">
    <property type="pathway name" value="Reuptake of GABA"/>
</dbReference>
<dbReference type="SABIO-RK" id="Q9NSD5"/>
<dbReference type="SignaLink" id="Q9NSD5"/>
<dbReference type="SIGNOR" id="Q9NSD5"/>
<dbReference type="BioGRID-ORCS" id="6540">
    <property type="hits" value="8 hits in 1143 CRISPR screens"/>
</dbReference>
<dbReference type="GenomeRNAi" id="6540"/>
<dbReference type="Pharos" id="Q9NSD5">
    <property type="development level" value="Tchem"/>
</dbReference>
<dbReference type="PRO" id="PR:Q9NSD5"/>
<dbReference type="Proteomes" id="UP000005640">
    <property type="component" value="Chromosome 12"/>
</dbReference>
<dbReference type="RNAct" id="Q9NSD5">
    <property type="molecule type" value="protein"/>
</dbReference>
<dbReference type="Bgee" id="ENSG00000010379">
    <property type="expression patterns" value="Expressed in pigmented layer of retina and 151 other cell types or tissues"/>
</dbReference>
<dbReference type="ExpressionAtlas" id="Q9NSD5">
    <property type="expression patterns" value="baseline and differential"/>
</dbReference>
<dbReference type="GO" id="GO:0016323">
    <property type="term" value="C:basolateral plasma membrane"/>
    <property type="evidence" value="ECO:0000250"/>
    <property type="project" value="ARUK-UCL"/>
</dbReference>
<dbReference type="GO" id="GO:0042995">
    <property type="term" value="C:cell projection"/>
    <property type="evidence" value="ECO:0000318"/>
    <property type="project" value="GO_Central"/>
</dbReference>
<dbReference type="GO" id="GO:0070062">
    <property type="term" value="C:extracellular exosome"/>
    <property type="evidence" value="ECO:0007005"/>
    <property type="project" value="UniProtKB"/>
</dbReference>
<dbReference type="GO" id="GO:0005886">
    <property type="term" value="C:plasma membrane"/>
    <property type="evidence" value="ECO:0000314"/>
    <property type="project" value="UniProtKB"/>
</dbReference>
<dbReference type="GO" id="GO:0098793">
    <property type="term" value="C:presynapse"/>
    <property type="evidence" value="ECO:0007669"/>
    <property type="project" value="GOC"/>
</dbReference>
<dbReference type="GO" id="GO:0015171">
    <property type="term" value="F:amino acid transmembrane transporter activity"/>
    <property type="evidence" value="ECO:0000314"/>
    <property type="project" value="ARUK-UCL"/>
</dbReference>
<dbReference type="GO" id="GO:0005283">
    <property type="term" value="F:amino acid:sodium symporter activity"/>
    <property type="evidence" value="ECO:0000314"/>
    <property type="project" value="UniProtKB"/>
</dbReference>
<dbReference type="GO" id="GO:0005308">
    <property type="term" value="F:creatine transmembrane transporter activity"/>
    <property type="evidence" value="ECO:0000250"/>
    <property type="project" value="ARUK-UCL"/>
</dbReference>
<dbReference type="GO" id="GO:0015185">
    <property type="term" value="F:gamma-aminobutyric acid transmembrane transporter activity"/>
    <property type="evidence" value="ECO:0000250"/>
    <property type="project" value="ARUK-UCL"/>
</dbReference>
<dbReference type="GO" id="GO:0005332">
    <property type="term" value="F:gamma-aminobutyric acid:sodium:chloride symporter activity"/>
    <property type="evidence" value="ECO:0000314"/>
    <property type="project" value="UniProtKB"/>
</dbReference>
<dbReference type="GO" id="GO:0008028">
    <property type="term" value="F:monocarboxylic acid transmembrane transporter activity"/>
    <property type="evidence" value="ECO:0000314"/>
    <property type="project" value="ARUK-UCL"/>
</dbReference>
<dbReference type="GO" id="GO:0005368">
    <property type="term" value="F:taurine transmembrane transporter activity"/>
    <property type="evidence" value="ECO:0000250"/>
    <property type="project" value="ARUK-UCL"/>
</dbReference>
<dbReference type="GO" id="GO:0005369">
    <property type="term" value="F:taurine:sodium symporter activity"/>
    <property type="evidence" value="ECO:0000250"/>
    <property type="project" value="ARUK-UCL"/>
</dbReference>
<dbReference type="GO" id="GO:0089718">
    <property type="term" value="P:amino acid import across plasma membrane"/>
    <property type="evidence" value="ECO:0000314"/>
    <property type="project" value="ARUK-UCL"/>
</dbReference>
<dbReference type="GO" id="GO:0006865">
    <property type="term" value="P:amino acid transport"/>
    <property type="evidence" value="ECO:0000318"/>
    <property type="project" value="GO_Central"/>
</dbReference>
<dbReference type="GO" id="GO:0015881">
    <property type="term" value="P:creatine transmembrane transport"/>
    <property type="evidence" value="ECO:0000250"/>
    <property type="project" value="ARUK-UCL"/>
</dbReference>
<dbReference type="GO" id="GO:0051939">
    <property type="term" value="P:gamma-aminobutyric acid import"/>
    <property type="evidence" value="ECO:0000250"/>
    <property type="project" value="ARUK-UCL"/>
</dbReference>
<dbReference type="GO" id="GO:0051936">
    <property type="term" value="P:gamma-aminobutyric acid reuptake"/>
    <property type="evidence" value="ECO:0000304"/>
    <property type="project" value="Reactome"/>
</dbReference>
<dbReference type="GO" id="GO:0015718">
    <property type="term" value="P:monocarboxylic acid transport"/>
    <property type="evidence" value="ECO:0000314"/>
    <property type="project" value="ARUK-UCL"/>
</dbReference>
<dbReference type="GO" id="GO:0035725">
    <property type="term" value="P:sodium ion transmembrane transport"/>
    <property type="evidence" value="ECO:0000318"/>
    <property type="project" value="GO_Central"/>
</dbReference>
<dbReference type="GO" id="GO:0015734">
    <property type="term" value="P:taurine transmembrane transport"/>
    <property type="evidence" value="ECO:0000250"/>
    <property type="project" value="ARUK-UCL"/>
</dbReference>
<dbReference type="GO" id="GO:0150104">
    <property type="term" value="P:transport across blood-brain barrier"/>
    <property type="evidence" value="ECO:0000303"/>
    <property type="project" value="ARUK-UCL"/>
</dbReference>
<dbReference type="CDD" id="cd11507">
    <property type="entry name" value="SLC6sbd_GAT2"/>
    <property type="match status" value="1"/>
</dbReference>
<dbReference type="InterPro" id="IPR000175">
    <property type="entry name" value="Na/ntran_symport"/>
</dbReference>
<dbReference type="InterPro" id="IPR002981">
    <property type="entry name" value="Na/ntran_symport_GABA_GAT2"/>
</dbReference>
<dbReference type="InterPro" id="IPR037272">
    <property type="entry name" value="SNS_sf"/>
</dbReference>
<dbReference type="NCBIfam" id="NF037979">
    <property type="entry name" value="Na_transp"/>
    <property type="match status" value="1"/>
</dbReference>
<dbReference type="PANTHER" id="PTHR11616:SF111">
    <property type="entry name" value="SODIUM- AND CHLORIDE-DEPENDENT GABA TRANSPORTER 2"/>
    <property type="match status" value="1"/>
</dbReference>
<dbReference type="PANTHER" id="PTHR11616">
    <property type="entry name" value="SODIUM/CHLORIDE DEPENDENT TRANSPORTER"/>
    <property type="match status" value="1"/>
</dbReference>
<dbReference type="Pfam" id="PF00209">
    <property type="entry name" value="SNF"/>
    <property type="match status" value="1"/>
</dbReference>
<dbReference type="PRINTS" id="PR01196">
    <property type="entry name" value="GAT2TRNSPORT"/>
</dbReference>
<dbReference type="PRINTS" id="PR00176">
    <property type="entry name" value="NANEUSMPORT"/>
</dbReference>
<dbReference type="SUPFAM" id="SSF161070">
    <property type="entry name" value="SNF-like"/>
    <property type="match status" value="1"/>
</dbReference>
<dbReference type="PROSITE" id="PS00610">
    <property type="entry name" value="NA_NEUROTRAN_SYMP_1"/>
    <property type="match status" value="1"/>
</dbReference>
<dbReference type="PROSITE" id="PS00754">
    <property type="entry name" value="NA_NEUROTRAN_SYMP_2"/>
    <property type="match status" value="1"/>
</dbReference>
<dbReference type="PROSITE" id="PS50267">
    <property type="entry name" value="NA_NEUROTRAN_SYMP_3"/>
    <property type="match status" value="1"/>
</dbReference>
<evidence type="ECO:0000250" key="1">
    <source>
        <dbReference type="UniProtKB" id="P31649"/>
    </source>
</evidence>
<evidence type="ECO:0000250" key="2">
    <source>
        <dbReference type="UniProtKB" id="Q7K4Y6"/>
    </source>
</evidence>
<evidence type="ECO:0000255" key="3"/>
<evidence type="ECO:0000256" key="4">
    <source>
        <dbReference type="SAM" id="MobiDB-lite"/>
    </source>
</evidence>
<evidence type="ECO:0000269" key="5">
    <source>
    </source>
</evidence>
<evidence type="ECO:0000269" key="6">
    <source>
    </source>
</evidence>
<evidence type="ECO:0000269" key="7">
    <source>
    </source>
</evidence>
<evidence type="ECO:0000303" key="8">
    <source>
    </source>
</evidence>
<evidence type="ECO:0000303" key="9">
    <source>
    </source>
</evidence>
<evidence type="ECO:0000303" key="10">
    <source ref="3"/>
</evidence>
<evidence type="ECO:0000305" key="11"/>
<evidence type="ECO:0000305" key="12">
    <source>
    </source>
</evidence>
<organism>
    <name type="scientific">Homo sapiens</name>
    <name type="common">Human</name>
    <dbReference type="NCBI Taxonomy" id="9606"/>
    <lineage>
        <taxon>Eukaryota</taxon>
        <taxon>Metazoa</taxon>
        <taxon>Chordata</taxon>
        <taxon>Craniata</taxon>
        <taxon>Vertebrata</taxon>
        <taxon>Euteleostomi</taxon>
        <taxon>Mammalia</taxon>
        <taxon>Eutheria</taxon>
        <taxon>Euarchontoglires</taxon>
        <taxon>Primates</taxon>
        <taxon>Haplorrhini</taxon>
        <taxon>Catarrhini</taxon>
        <taxon>Hominidae</taxon>
        <taxon>Homo</taxon>
    </lineage>
</organism>
<protein>
    <recommendedName>
        <fullName>Sodium- and chloride-dependent GABA transporter 2</fullName>
        <shortName>GAT-2</shortName>
    </recommendedName>
    <alternativeName>
        <fullName>Solute carrier family 6 member 13</fullName>
    </alternativeName>
</protein>
<accession>Q9NSD5</accession>
<accession>B4DJL1</accession>
<accession>Q8TCC2</accession>
<accession>Q8WW56</accession>
<sequence>MDSRVSGTTSNGETKPVYPVMEKKEEDGTLERGHWNNKMEFVLSVAGEIIGLGNVWRFPYLCYKNGGGAFFIPYLVFLFTCGIPVFLLETALGQYTSQGGVTAWRKICPIFEGIGYASQMIVILLNVYYIIVLAWALFYLFSSFTIDLPWGGCYHEWNTEHCMEFQKTNGSLNGTSENATSPVIEFWERRVLKISDGIQHLGALRWELALCLLLAWVICYFCIWKGVKSTGKVVYFTATFPYLMLVVLLIRGVTLPGAAQGIQFYLYPNLTRLWDPQVWMDAGTQIFFSFAICLGCLTALGSYNKYHNNCYRDCIALCFLNSGTSFVAGFAIFSILGFMSQEQGVPISEVAESGPGLAFIAYPRAVVMLPFSPLWACCFFFMVVLLGLDSQFVCVESLVTALVDMYPHVFRKKNRREVLILGVSVVSFLVGLIMLTEGGMYVFQLFDYYAASGMCLLFVAIFESLCVAWVYGAKRFYDNIEDMIGYRPWPLIKYCWLFLTPAVCTATFLFSLIKYTPLTYNKKYTYPWWGDALGWLLALSSMVCIPAWSLYRLGTLKGPFRERIRQLMCPAEDLPQRNPAGPSAPATPRTSLLRLTELESHC</sequence>
<proteinExistence type="evidence at protein level"/>
<keyword id="KW-0025">Alternative splicing</keyword>
<keyword id="KW-1003">Cell membrane</keyword>
<keyword id="KW-1015">Disulfide bond</keyword>
<keyword id="KW-0325">Glycoprotein</keyword>
<keyword id="KW-0472">Membrane</keyword>
<keyword id="KW-0532">Neurotransmitter transport</keyword>
<keyword id="KW-0597">Phosphoprotein</keyword>
<keyword id="KW-1267">Proteomics identification</keyword>
<keyword id="KW-1185">Reference proteome</keyword>
<keyword id="KW-0769">Symport</keyword>
<keyword id="KW-0812">Transmembrane</keyword>
<keyword id="KW-1133">Transmembrane helix</keyword>
<keyword id="KW-0813">Transport</keyword>
<name>S6A13_HUMAN</name>
<comment type="function">
    <text evidence="1 6 7">Mediates sodium- and chloride-dependent transport of gamma-aminobutyric acid (GABA) (PubMed:17502375, PubMed:22932902). Mediates transport of beta-alanine (PubMed:17502375). Can also mediate transport of taurine and hypotaurine (By similarity).</text>
</comment>
<comment type="catalytic activity">
    <reaction evidence="6 7">
        <text>4-aminobutanoate(out) + chloride(out) + 2 Na(+)(out) = 4-aminobutanoate(in) + chloride(in) + 2 Na(+)(in)</text>
        <dbReference type="Rhea" id="RHEA:70687"/>
        <dbReference type="ChEBI" id="CHEBI:17996"/>
        <dbReference type="ChEBI" id="CHEBI:29101"/>
        <dbReference type="ChEBI" id="CHEBI:59888"/>
    </reaction>
    <physiologicalReaction direction="left-to-right" evidence="12">
        <dbReference type="Rhea" id="RHEA:70688"/>
    </physiologicalReaction>
</comment>
<comment type="catalytic activity">
    <reaction evidence="1">
        <text>taurine(out) + chloride(out) + 2 Na(+)(out) = taurine(in) + chloride(in) + 2 Na(+)(in)</text>
        <dbReference type="Rhea" id="RHEA:71223"/>
        <dbReference type="ChEBI" id="CHEBI:17996"/>
        <dbReference type="ChEBI" id="CHEBI:29101"/>
        <dbReference type="ChEBI" id="CHEBI:507393"/>
    </reaction>
    <physiologicalReaction direction="left-to-right" evidence="1">
        <dbReference type="Rhea" id="RHEA:71224"/>
    </physiologicalReaction>
</comment>
<comment type="catalytic activity">
    <reaction evidence="6">
        <text>beta-alanine(out) + chloride(out) + 2 Na(+)(out) = beta-alanine(in) + chloride(in) + 2 Na(+)(in)</text>
        <dbReference type="Rhea" id="RHEA:71247"/>
        <dbReference type="ChEBI" id="CHEBI:17996"/>
        <dbReference type="ChEBI" id="CHEBI:29101"/>
        <dbReference type="ChEBI" id="CHEBI:57966"/>
    </reaction>
    <physiologicalReaction direction="left-to-right" evidence="12">
        <dbReference type="Rhea" id="RHEA:71248"/>
    </physiologicalReaction>
</comment>
<comment type="catalytic activity">
    <reaction evidence="1">
        <text>hypotaurine(out) + chloride(out) + 2 Na(+)(out) = hypotaurine(in) + chloride(in) + 2 Na(+)(in)</text>
        <dbReference type="Rhea" id="RHEA:71243"/>
        <dbReference type="ChEBI" id="CHEBI:17996"/>
        <dbReference type="ChEBI" id="CHEBI:29101"/>
        <dbReference type="ChEBI" id="CHEBI:57853"/>
    </reaction>
    <physiologicalReaction direction="left-to-right" evidence="1">
        <dbReference type="Rhea" id="RHEA:71244"/>
    </physiologicalReaction>
</comment>
<comment type="activity regulation">
    <text evidence="6">GABA transport is inhibited by beta-alanine, 2,3-diaminopropionic acid and SNAP-5114.</text>
</comment>
<comment type="biophysicochemical properties">
    <kinetics>
        <KM evidence="6">8.24 uM for GABA</KM>
        <KM evidence="7">26.2 uM for GABA</KM>
        <Vmax evidence="7">0.39 pmol/min/ug enzyme for GABA</Vmax>
    </kinetics>
</comment>
<comment type="interaction">
    <interactant intactId="EBI-25831241">
        <id>Q9NSD5-3</id>
    </interactant>
    <interactant intactId="EBI-21535880">
        <id>Q92870-2</id>
        <label>APBB2</label>
    </interactant>
    <organismsDiffer>false</organismsDiffer>
    <experiments>3</experiments>
</comment>
<comment type="interaction">
    <interactant intactId="EBI-25831241">
        <id>Q9NSD5-3</id>
    </interactant>
    <interactant intactId="EBI-930964">
        <id>P54253</id>
        <label>ATXN1</label>
    </interactant>
    <organismsDiffer>false</organismsDiffer>
    <experiments>6</experiments>
</comment>
<comment type="interaction">
    <interactant intactId="EBI-25831241">
        <id>Q9NSD5-3</id>
    </interactant>
    <interactant intactId="EBI-348399">
        <id>P22607</id>
        <label>FGFR3</label>
    </interactant>
    <organismsDiffer>false</organismsDiffer>
    <experiments>3</experiments>
</comment>
<comment type="interaction">
    <interactant intactId="EBI-25831241">
        <id>Q9NSD5-3</id>
    </interactant>
    <interactant intactId="EBI-352682">
        <id>P04792</id>
        <label>HSPB1</label>
    </interactant>
    <organismsDiffer>false</organismsDiffer>
    <experiments>3</experiments>
</comment>
<comment type="interaction">
    <interactant intactId="EBI-25831241">
        <id>Q9NSD5-3</id>
    </interactant>
    <interactant intactId="EBI-10975473">
        <id>O60333-2</id>
        <label>KIF1B</label>
    </interactant>
    <organismsDiffer>false</organismsDiffer>
    <experiments>3</experiments>
</comment>
<comment type="interaction">
    <interactant intactId="EBI-25831241">
        <id>Q9NSD5-3</id>
    </interactant>
    <interactant intactId="EBI-2010251">
        <id>P49810</id>
        <label>PSEN2</label>
    </interactant>
    <organismsDiffer>false</organismsDiffer>
    <experiments>3</experiments>
</comment>
<comment type="interaction">
    <interactant intactId="EBI-25831241">
        <id>Q9NSD5-3</id>
    </interactant>
    <interactant intactId="EBI-396669">
        <id>Q9Y3C5</id>
        <label>RNF11</label>
    </interactant>
    <organismsDiffer>false</organismsDiffer>
    <experiments>3</experiments>
</comment>
<comment type="subcellular location">
    <subcellularLocation>
        <location evidence="7">Cell membrane</location>
        <topology evidence="3">Multi-pass membrane protein</topology>
    </subcellularLocation>
    <subcellularLocation>
        <location evidence="1">Basolateral cell membrane</location>
        <topology evidence="3">Multi-pass membrane protein</topology>
    </subcellularLocation>
</comment>
<comment type="alternative products">
    <event type="alternative splicing"/>
    <isoform>
        <id>Q9NSD5-1</id>
        <name>1</name>
        <sequence type="displayed"/>
    </isoform>
    <isoform>
        <id>Q9NSD5-2</id>
        <name>2</name>
        <sequence type="described" ref="VSP_043070"/>
    </isoform>
    <isoform>
        <id>Q9NSD5-3</id>
        <name>3</name>
        <sequence type="described" ref="VSP_044887 VSP_044888"/>
    </isoform>
</comment>
<comment type="tissue specificity">
    <text evidence="5 6">Expressed in brain, kidney, lung, liver and testis.</text>
</comment>
<comment type="similarity">
    <text evidence="11">Belongs to the sodium:neurotransmitter symporter (SNF) (TC 2.A.22) family. SLC6A13 subfamily.</text>
</comment>
<comment type="sequence caution" evidence="11">
    <conflict type="frameshift">
        <sequence resource="EMBL-CDS" id="AAF64247"/>
    </conflict>
</comment>
<feature type="chain" id="PRO_0000214792" description="Sodium- and chloride-dependent GABA transporter 2">
    <location>
        <begin position="1"/>
        <end position="602"/>
    </location>
</feature>
<feature type="topological domain" description="Cytoplasmic" evidence="3">
    <location>
        <begin position="1"/>
        <end position="40"/>
    </location>
</feature>
<feature type="transmembrane region" description="Helical; Name=1" evidence="3">
    <location>
        <begin position="41"/>
        <end position="61"/>
    </location>
</feature>
<feature type="transmembrane region" description="Helical; Name=2" evidence="3">
    <location>
        <begin position="68"/>
        <end position="88"/>
    </location>
</feature>
<feature type="transmembrane region" description="Helical; Name=3" evidence="3">
    <location>
        <begin position="121"/>
        <end position="141"/>
    </location>
</feature>
<feature type="topological domain" description="Extracellular" evidence="3">
    <location>
        <begin position="142"/>
        <end position="206"/>
    </location>
</feature>
<feature type="transmembrane region" description="Helical; Name=4" evidence="3">
    <location>
        <begin position="207"/>
        <end position="227"/>
    </location>
</feature>
<feature type="transmembrane region" description="Helical; Name=5" evidence="3">
    <location>
        <begin position="233"/>
        <end position="253"/>
    </location>
</feature>
<feature type="transmembrane region" description="Helical; Name=6" evidence="3">
    <location>
        <begin position="282"/>
        <end position="302"/>
    </location>
</feature>
<feature type="transmembrane region" description="Helical; Name=7" evidence="3">
    <location>
        <begin position="319"/>
        <end position="339"/>
    </location>
</feature>
<feature type="transmembrane region" description="Helical; Name=8" evidence="3">
    <location>
        <begin position="366"/>
        <end position="386"/>
    </location>
</feature>
<feature type="transmembrane region" description="Helical; Name=9" evidence="3">
    <location>
        <begin position="418"/>
        <end position="438"/>
    </location>
</feature>
<feature type="transmembrane region" description="Helical; Name=10" evidence="3">
    <location>
        <begin position="453"/>
        <end position="473"/>
    </location>
</feature>
<feature type="transmembrane region" description="Helical; Name=11" evidence="3">
    <location>
        <begin position="490"/>
        <end position="510"/>
    </location>
</feature>
<feature type="transmembrane region" description="Helical; Name=12" evidence="3">
    <location>
        <begin position="528"/>
        <end position="548"/>
    </location>
</feature>
<feature type="topological domain" description="Cytoplasmic" evidence="3">
    <location>
        <begin position="549"/>
        <end position="602"/>
    </location>
</feature>
<feature type="region of interest" description="Disordered" evidence="4">
    <location>
        <begin position="1"/>
        <end position="22"/>
    </location>
</feature>
<feature type="compositionally biased region" description="Polar residues" evidence="4">
    <location>
        <begin position="1"/>
        <end position="13"/>
    </location>
</feature>
<feature type="modified residue" description="Phosphothreonine" evidence="1">
    <location>
        <position position="587"/>
    </location>
</feature>
<feature type="modified residue" description="Phosphoserine" evidence="1">
    <location>
        <position position="591"/>
    </location>
</feature>
<feature type="glycosylation site" description="N-linked (GlcNAc...) asparagine" evidence="3">
    <location>
        <position position="173"/>
    </location>
</feature>
<feature type="glycosylation site" description="N-linked (GlcNAc...) asparagine" evidence="3">
    <location>
        <position position="269"/>
    </location>
</feature>
<feature type="disulfide bond" evidence="2">
    <location>
        <begin position="153"/>
        <end position="162"/>
    </location>
</feature>
<feature type="splice variant" id="VSP_043070" description="In isoform 2." evidence="8">
    <location>
        <begin position="68"/>
        <end position="159"/>
    </location>
</feature>
<feature type="splice variant" id="VSP_044887" description="In isoform 3." evidence="9 10">
    <original>AFFIPYLVFLFTCGIPVFLLETALGQYTS</original>
    <variation>EMRALVPPHPLLEGGYFHLLHLRPLWGVP</variation>
    <location>
        <begin position="69"/>
        <end position="97"/>
    </location>
</feature>
<feature type="splice variant" id="VSP_044888" description="In isoform 3." evidence="9 10">
    <location>
        <begin position="98"/>
        <end position="602"/>
    </location>
</feature>
<feature type="sequence variant" id="VAR_011594" description="In dbSNP:rs577294.">
    <original>V</original>
    <variation>I</variation>
    <location>
        <position position="426"/>
    </location>
</feature>
<feature type="mutagenesis site" description="50% reduction of GABA-uptake." evidence="7">
    <original>E</original>
    <variation>A</variation>
    <location>
        <position position="48"/>
    </location>
</feature>
<feature type="mutagenesis site" description="90% reduction of GABA-uptake." evidence="7">
    <original>E</original>
    <variation>L</variation>
    <variation>Y</variation>
    <location>
        <position position="48"/>
    </location>
</feature>
<feature type="mutagenesis site" description="Complete loss of GABA-uptake." evidence="7">
    <original>G</original>
    <variation>A</variation>
    <variation>L</variation>
    <location>
        <position position="51"/>
    </location>
</feature>
<feature type="mutagenesis site" description="Complete loss of GABA-uptake." evidence="7">
    <original>V</original>
    <variation>I</variation>
    <location>
        <position position="132"/>
    </location>
</feature>
<feature type="sequence conflict" description="In Ref. 1; AAF64247." evidence="11" ref="1">
    <location>
        <begin position="19"/>
        <end position="36"/>
    </location>
</feature>
<feature type="sequence conflict" description="In Ref. 1; AAF64247." evidence="11" ref="1">
    <original>N</original>
    <variation>H</variation>
    <location>
        <position position="37"/>
    </location>
</feature>
<feature type="sequence conflict" description="In Ref. 1; AAF64247." evidence="11" ref="1">
    <location>
        <begin position="312"/>
        <end position="321"/>
    </location>
</feature>
<feature type="sequence conflict" description="In Ref. 1; AAF64247." evidence="11" ref="1">
    <original>L</original>
    <variation>P</variation>
    <location>
        <position position="429"/>
    </location>
</feature>
<reference key="1">
    <citation type="journal article" date="2001" name="Can. J. Physiol. Pharmacol.">
        <title>Sequence and chromosomal assignment of a human novel cDNA: similarity to gamma-aminobutyric acid transporter.</title>
        <authorList>
            <person name="Gong Y."/>
            <person name="Zhang M."/>
            <person name="Cui L."/>
            <person name="Minuk G.Y."/>
        </authorList>
    </citation>
    <scope>NUCLEOTIDE SEQUENCE [MRNA] (ISOFORM 1)</scope>
    <scope>TISSUE SPECIFICITY</scope>
    <source>
        <tissue>Liver</tissue>
    </source>
</reference>
<reference key="2">
    <citation type="journal article" date="2007" name="J. Biol. Chem.">
        <title>Cloning and characterization of a functional human gamma-aminobutyric acid (GABA) transporter, human GAT-2.</title>
        <authorList>
            <person name="Christiansen B."/>
            <person name="Meinild A.-K."/>
            <person name="Jensen A.A."/>
            <person name="Braeuner-Osborne H."/>
        </authorList>
    </citation>
    <scope>NUCLEOTIDE SEQUENCE [MRNA] (ISOFORM 1)</scope>
    <scope>FUNCTION</scope>
    <scope>BIOPHYSICOCHEMICAL PROPERTIES</scope>
    <scope>TISSUE SPECIFICITY</scope>
    <scope>TRANSPORTER ACTIVITY</scope>
    <scope>ACTIVITY REGULATION</scope>
</reference>
<reference key="3">
    <citation type="submission" date="2001-12" db="EMBL/GenBank/DDBJ databases">
        <authorList>
            <person name="Guo J.H."/>
            <person name="Zan Q."/>
            <person name="Yu L."/>
        </authorList>
    </citation>
    <scope>NUCLEOTIDE SEQUENCE [MRNA] (ISOFORM 3)</scope>
    <source>
        <tissue>Kidney</tissue>
    </source>
</reference>
<reference key="4">
    <citation type="journal article" date="2004" name="Nat. Genet.">
        <title>Complete sequencing and characterization of 21,243 full-length human cDNAs.</title>
        <authorList>
            <person name="Ota T."/>
            <person name="Suzuki Y."/>
            <person name="Nishikawa T."/>
            <person name="Otsuki T."/>
            <person name="Sugiyama T."/>
            <person name="Irie R."/>
            <person name="Wakamatsu A."/>
            <person name="Hayashi K."/>
            <person name="Sato H."/>
            <person name="Nagai K."/>
            <person name="Kimura K."/>
            <person name="Makita H."/>
            <person name="Sekine M."/>
            <person name="Obayashi M."/>
            <person name="Nishi T."/>
            <person name="Shibahara T."/>
            <person name="Tanaka T."/>
            <person name="Ishii S."/>
            <person name="Yamamoto J."/>
            <person name="Saito K."/>
            <person name="Kawai Y."/>
            <person name="Isono Y."/>
            <person name="Nakamura Y."/>
            <person name="Nagahari K."/>
            <person name="Murakami K."/>
            <person name="Yasuda T."/>
            <person name="Iwayanagi T."/>
            <person name="Wagatsuma M."/>
            <person name="Shiratori A."/>
            <person name="Sudo H."/>
            <person name="Hosoiri T."/>
            <person name="Kaku Y."/>
            <person name="Kodaira H."/>
            <person name="Kondo H."/>
            <person name="Sugawara M."/>
            <person name="Takahashi M."/>
            <person name="Kanda K."/>
            <person name="Yokoi T."/>
            <person name="Furuya T."/>
            <person name="Kikkawa E."/>
            <person name="Omura Y."/>
            <person name="Abe K."/>
            <person name="Kamihara K."/>
            <person name="Katsuta N."/>
            <person name="Sato K."/>
            <person name="Tanikawa M."/>
            <person name="Yamazaki M."/>
            <person name="Ninomiya K."/>
            <person name="Ishibashi T."/>
            <person name="Yamashita H."/>
            <person name="Murakawa K."/>
            <person name="Fujimori K."/>
            <person name="Tanai H."/>
            <person name="Kimata M."/>
            <person name="Watanabe M."/>
            <person name="Hiraoka S."/>
            <person name="Chiba Y."/>
            <person name="Ishida S."/>
            <person name="Ono Y."/>
            <person name="Takiguchi S."/>
            <person name="Watanabe S."/>
            <person name="Yosida M."/>
            <person name="Hotuta T."/>
            <person name="Kusano J."/>
            <person name="Kanehori K."/>
            <person name="Takahashi-Fujii A."/>
            <person name="Hara H."/>
            <person name="Tanase T.-O."/>
            <person name="Nomura Y."/>
            <person name="Togiya S."/>
            <person name="Komai F."/>
            <person name="Hara R."/>
            <person name="Takeuchi K."/>
            <person name="Arita M."/>
            <person name="Imose N."/>
            <person name="Musashino K."/>
            <person name="Yuuki H."/>
            <person name="Oshima A."/>
            <person name="Sasaki N."/>
            <person name="Aotsuka S."/>
            <person name="Yoshikawa Y."/>
            <person name="Matsunawa H."/>
            <person name="Ichihara T."/>
            <person name="Shiohata N."/>
            <person name="Sano S."/>
            <person name="Moriya S."/>
            <person name="Momiyama H."/>
            <person name="Satoh N."/>
            <person name="Takami S."/>
            <person name="Terashima Y."/>
            <person name="Suzuki O."/>
            <person name="Nakagawa S."/>
            <person name="Senoh A."/>
            <person name="Mizoguchi H."/>
            <person name="Goto Y."/>
            <person name="Shimizu F."/>
            <person name="Wakebe H."/>
            <person name="Hishigaki H."/>
            <person name="Watanabe T."/>
            <person name="Sugiyama A."/>
            <person name="Takemoto M."/>
            <person name="Kawakami B."/>
            <person name="Yamazaki M."/>
            <person name="Watanabe K."/>
            <person name="Kumagai A."/>
            <person name="Itakura S."/>
            <person name="Fukuzumi Y."/>
            <person name="Fujimori Y."/>
            <person name="Komiyama M."/>
            <person name="Tashiro H."/>
            <person name="Tanigami A."/>
            <person name="Fujiwara T."/>
            <person name="Ono T."/>
            <person name="Yamada K."/>
            <person name="Fujii Y."/>
            <person name="Ozaki K."/>
            <person name="Hirao M."/>
            <person name="Ohmori Y."/>
            <person name="Kawabata A."/>
            <person name="Hikiji T."/>
            <person name="Kobatake N."/>
            <person name="Inagaki H."/>
            <person name="Ikema Y."/>
            <person name="Okamoto S."/>
            <person name="Okitani R."/>
            <person name="Kawakami T."/>
            <person name="Noguchi S."/>
            <person name="Itoh T."/>
            <person name="Shigeta K."/>
            <person name="Senba T."/>
            <person name="Matsumura K."/>
            <person name="Nakajima Y."/>
            <person name="Mizuno T."/>
            <person name="Morinaga M."/>
            <person name="Sasaki M."/>
            <person name="Togashi T."/>
            <person name="Oyama M."/>
            <person name="Hata H."/>
            <person name="Watanabe M."/>
            <person name="Komatsu T."/>
            <person name="Mizushima-Sugano J."/>
            <person name="Satoh T."/>
            <person name="Shirai Y."/>
            <person name="Takahashi Y."/>
            <person name="Nakagawa K."/>
            <person name="Okumura K."/>
            <person name="Nagase T."/>
            <person name="Nomura N."/>
            <person name="Kikuchi H."/>
            <person name="Masuho Y."/>
            <person name="Yamashita R."/>
            <person name="Nakai K."/>
            <person name="Yada T."/>
            <person name="Nakamura Y."/>
            <person name="Ohara O."/>
            <person name="Isogai T."/>
            <person name="Sugano S."/>
        </authorList>
    </citation>
    <scope>NUCLEOTIDE SEQUENCE [LARGE SCALE MRNA] (ISOFORMS 1 AND 2)</scope>
    <source>
        <tissue>Kidney</tissue>
        <tissue>Thalamus</tissue>
    </source>
</reference>
<reference key="5">
    <citation type="journal article" date="2006" name="Nature">
        <title>The finished DNA sequence of human chromosome 12.</title>
        <authorList>
            <person name="Scherer S.E."/>
            <person name="Muzny D.M."/>
            <person name="Buhay C.J."/>
            <person name="Chen R."/>
            <person name="Cree A."/>
            <person name="Ding Y."/>
            <person name="Dugan-Rocha S."/>
            <person name="Gill R."/>
            <person name="Gunaratne P."/>
            <person name="Harris R.A."/>
            <person name="Hawes A.C."/>
            <person name="Hernandez J."/>
            <person name="Hodgson A.V."/>
            <person name="Hume J."/>
            <person name="Jackson A."/>
            <person name="Khan Z.M."/>
            <person name="Kovar-Smith C."/>
            <person name="Lewis L.R."/>
            <person name="Lozado R.J."/>
            <person name="Metzker M.L."/>
            <person name="Milosavljevic A."/>
            <person name="Miner G.R."/>
            <person name="Montgomery K.T."/>
            <person name="Morgan M.B."/>
            <person name="Nazareth L.V."/>
            <person name="Scott G."/>
            <person name="Sodergren E."/>
            <person name="Song X.-Z."/>
            <person name="Steffen D."/>
            <person name="Lovering R.C."/>
            <person name="Wheeler D.A."/>
            <person name="Worley K.C."/>
            <person name="Yuan Y."/>
            <person name="Zhang Z."/>
            <person name="Adams C.Q."/>
            <person name="Ansari-Lari M.A."/>
            <person name="Ayele M."/>
            <person name="Brown M.J."/>
            <person name="Chen G."/>
            <person name="Chen Z."/>
            <person name="Clerc-Blankenburg K.P."/>
            <person name="Davis C."/>
            <person name="Delgado O."/>
            <person name="Dinh H.H."/>
            <person name="Draper H."/>
            <person name="Gonzalez-Garay M.L."/>
            <person name="Havlak P."/>
            <person name="Jackson L.R."/>
            <person name="Jacob L.S."/>
            <person name="Kelly S.H."/>
            <person name="Li L."/>
            <person name="Li Z."/>
            <person name="Liu J."/>
            <person name="Liu W."/>
            <person name="Lu J."/>
            <person name="Maheshwari M."/>
            <person name="Nguyen B.-V."/>
            <person name="Okwuonu G.O."/>
            <person name="Pasternak S."/>
            <person name="Perez L.M."/>
            <person name="Plopper F.J.H."/>
            <person name="Santibanez J."/>
            <person name="Shen H."/>
            <person name="Tabor P.E."/>
            <person name="Verduzco D."/>
            <person name="Waldron L."/>
            <person name="Wang Q."/>
            <person name="Williams G.A."/>
            <person name="Zhang J."/>
            <person name="Zhou J."/>
            <person name="Allen C.C."/>
            <person name="Amin A.G."/>
            <person name="Anyalebechi V."/>
            <person name="Bailey M."/>
            <person name="Barbaria J.A."/>
            <person name="Bimage K.E."/>
            <person name="Bryant N.P."/>
            <person name="Burch P.E."/>
            <person name="Burkett C.E."/>
            <person name="Burrell K.L."/>
            <person name="Calderon E."/>
            <person name="Cardenas V."/>
            <person name="Carter K."/>
            <person name="Casias K."/>
            <person name="Cavazos I."/>
            <person name="Cavazos S.R."/>
            <person name="Ceasar H."/>
            <person name="Chacko J."/>
            <person name="Chan S.N."/>
            <person name="Chavez D."/>
            <person name="Christopoulos C."/>
            <person name="Chu J."/>
            <person name="Cockrell R."/>
            <person name="Cox C.D."/>
            <person name="Dang M."/>
            <person name="Dathorne S.R."/>
            <person name="David R."/>
            <person name="Davis C.M."/>
            <person name="Davy-Carroll L."/>
            <person name="Deshazo D.R."/>
            <person name="Donlin J.E."/>
            <person name="D'Souza L."/>
            <person name="Eaves K.A."/>
            <person name="Egan A."/>
            <person name="Emery-Cohen A.J."/>
            <person name="Escotto M."/>
            <person name="Flagg N."/>
            <person name="Forbes L.D."/>
            <person name="Gabisi A.M."/>
            <person name="Garza M."/>
            <person name="Hamilton C."/>
            <person name="Henderson N."/>
            <person name="Hernandez O."/>
            <person name="Hines S."/>
            <person name="Hogues M.E."/>
            <person name="Huang M."/>
            <person name="Idlebird D.G."/>
            <person name="Johnson R."/>
            <person name="Jolivet A."/>
            <person name="Jones S."/>
            <person name="Kagan R."/>
            <person name="King L.M."/>
            <person name="Leal B."/>
            <person name="Lebow H."/>
            <person name="Lee S."/>
            <person name="LeVan J.M."/>
            <person name="Lewis L.C."/>
            <person name="London P."/>
            <person name="Lorensuhewa L.M."/>
            <person name="Loulseged H."/>
            <person name="Lovett D.A."/>
            <person name="Lucier A."/>
            <person name="Lucier R.L."/>
            <person name="Ma J."/>
            <person name="Madu R.C."/>
            <person name="Mapua P."/>
            <person name="Martindale A.D."/>
            <person name="Martinez E."/>
            <person name="Massey E."/>
            <person name="Mawhiney S."/>
            <person name="Meador M.G."/>
            <person name="Mendez S."/>
            <person name="Mercado C."/>
            <person name="Mercado I.C."/>
            <person name="Merritt C.E."/>
            <person name="Miner Z.L."/>
            <person name="Minja E."/>
            <person name="Mitchell T."/>
            <person name="Mohabbat F."/>
            <person name="Mohabbat K."/>
            <person name="Montgomery B."/>
            <person name="Moore N."/>
            <person name="Morris S."/>
            <person name="Munidasa M."/>
            <person name="Ngo R.N."/>
            <person name="Nguyen N.B."/>
            <person name="Nickerson E."/>
            <person name="Nwaokelemeh O.O."/>
            <person name="Nwokenkwo S."/>
            <person name="Obregon M."/>
            <person name="Oguh M."/>
            <person name="Oragunye N."/>
            <person name="Oviedo R.J."/>
            <person name="Parish B.J."/>
            <person name="Parker D.N."/>
            <person name="Parrish J."/>
            <person name="Parks K.L."/>
            <person name="Paul H.A."/>
            <person name="Payton B.A."/>
            <person name="Perez A."/>
            <person name="Perrin W."/>
            <person name="Pickens A."/>
            <person name="Primus E.L."/>
            <person name="Pu L.-L."/>
            <person name="Puazo M."/>
            <person name="Quiles M.M."/>
            <person name="Quiroz J.B."/>
            <person name="Rabata D."/>
            <person name="Reeves K."/>
            <person name="Ruiz S.J."/>
            <person name="Shao H."/>
            <person name="Sisson I."/>
            <person name="Sonaike T."/>
            <person name="Sorelle R.P."/>
            <person name="Sutton A.E."/>
            <person name="Svatek A.F."/>
            <person name="Svetz L.A."/>
            <person name="Tamerisa K.S."/>
            <person name="Taylor T.R."/>
            <person name="Teague B."/>
            <person name="Thomas N."/>
            <person name="Thorn R.D."/>
            <person name="Trejos Z.Y."/>
            <person name="Trevino B.K."/>
            <person name="Ukegbu O.N."/>
            <person name="Urban J.B."/>
            <person name="Vasquez L.I."/>
            <person name="Vera V.A."/>
            <person name="Villasana D.M."/>
            <person name="Wang L."/>
            <person name="Ward-Moore S."/>
            <person name="Warren J.T."/>
            <person name="Wei X."/>
            <person name="White F."/>
            <person name="Williamson A.L."/>
            <person name="Wleczyk R."/>
            <person name="Wooden H.S."/>
            <person name="Wooden S.H."/>
            <person name="Yen J."/>
            <person name="Yoon L."/>
            <person name="Yoon V."/>
            <person name="Zorrilla S.E."/>
            <person name="Nelson D."/>
            <person name="Kucherlapati R."/>
            <person name="Weinstock G."/>
            <person name="Gibbs R.A."/>
        </authorList>
    </citation>
    <scope>NUCLEOTIDE SEQUENCE [LARGE SCALE GENOMIC DNA]</scope>
</reference>
<reference key="6">
    <citation type="submission" date="2005-09" db="EMBL/GenBank/DDBJ databases">
        <authorList>
            <person name="Mural R.J."/>
            <person name="Istrail S."/>
            <person name="Sutton G.G."/>
            <person name="Florea L."/>
            <person name="Halpern A.L."/>
            <person name="Mobarry C.M."/>
            <person name="Lippert R."/>
            <person name="Walenz B."/>
            <person name="Shatkay H."/>
            <person name="Dew I."/>
            <person name="Miller J.R."/>
            <person name="Flanigan M.J."/>
            <person name="Edwards N.J."/>
            <person name="Bolanos R."/>
            <person name="Fasulo D."/>
            <person name="Halldorsson B.V."/>
            <person name="Hannenhalli S."/>
            <person name="Turner R."/>
            <person name="Yooseph S."/>
            <person name="Lu F."/>
            <person name="Nusskern D.R."/>
            <person name="Shue B.C."/>
            <person name="Zheng X.H."/>
            <person name="Zhong F."/>
            <person name="Delcher A.L."/>
            <person name="Huson D.H."/>
            <person name="Kravitz S.A."/>
            <person name="Mouchard L."/>
            <person name="Reinert K."/>
            <person name="Remington K.A."/>
            <person name="Clark A.G."/>
            <person name="Waterman M.S."/>
            <person name="Eichler E.E."/>
            <person name="Adams M.D."/>
            <person name="Hunkapiller M.W."/>
            <person name="Myers E.W."/>
            <person name="Venter J.C."/>
        </authorList>
    </citation>
    <scope>NUCLEOTIDE SEQUENCE [LARGE SCALE GENOMIC DNA]</scope>
</reference>
<reference key="7">
    <citation type="journal article" date="2004" name="Genome Res.">
        <title>The status, quality, and expansion of the NIH full-length cDNA project: the Mammalian Gene Collection (MGC).</title>
        <authorList>
            <consortium name="The MGC Project Team"/>
        </authorList>
    </citation>
    <scope>NUCLEOTIDE SEQUENCE [LARGE SCALE MRNA] (ISOFORMS 1 AND 3)</scope>
    <source>
        <tissue>Kidney</tissue>
    </source>
</reference>
<reference key="8">
    <citation type="journal article" date="2012" name="J. Biol. Chem.">
        <title>High selectivity of the gamma-aminobutyric acid transporter 2 (GAT-2, SLC6A13) revealed by structure-based approach.</title>
        <authorList>
            <person name="Schlessinger A."/>
            <person name="Wittwer M.B."/>
            <person name="Dahlin A."/>
            <person name="Khuri N."/>
            <person name="Bonomi M."/>
            <person name="Fan H."/>
            <person name="Giacomini K.M."/>
            <person name="Sali A."/>
        </authorList>
    </citation>
    <scope>FUNCTION</scope>
    <scope>SUBCELLULAR LOCATION</scope>
    <scope>MUTAGENESIS OF GLU-48; GLY-51 AND VAL-132</scope>
    <scope>TRANSPORTER ACTIVITY</scope>
    <scope>BIOPHYSICOCHEMICAL PROPERTIES</scope>
</reference>
<gene>
    <name type="primary">SLC6A13</name>
    <name type="synonym">GAT2</name>
</gene>